<reference key="1">
    <citation type="journal article" date="2005" name="Proc. Natl. Acad. Sci. U.S.A.">
        <title>Genome analysis of multiple pathogenic isolates of Streptococcus agalactiae: implications for the microbial 'pan-genome'.</title>
        <authorList>
            <person name="Tettelin H."/>
            <person name="Masignani V."/>
            <person name="Cieslewicz M.J."/>
            <person name="Donati C."/>
            <person name="Medini D."/>
            <person name="Ward N.L."/>
            <person name="Angiuoli S.V."/>
            <person name="Crabtree J."/>
            <person name="Jones A.L."/>
            <person name="Durkin A.S."/>
            <person name="DeBoy R.T."/>
            <person name="Davidsen T.M."/>
            <person name="Mora M."/>
            <person name="Scarselli M."/>
            <person name="Margarit y Ros I."/>
            <person name="Peterson J.D."/>
            <person name="Hauser C.R."/>
            <person name="Sundaram J.P."/>
            <person name="Nelson W.C."/>
            <person name="Madupu R."/>
            <person name="Brinkac L.M."/>
            <person name="Dodson R.J."/>
            <person name="Rosovitz M.J."/>
            <person name="Sullivan S.A."/>
            <person name="Daugherty S.C."/>
            <person name="Haft D.H."/>
            <person name="Selengut J."/>
            <person name="Gwinn M.L."/>
            <person name="Zhou L."/>
            <person name="Zafar N."/>
            <person name="Khouri H."/>
            <person name="Radune D."/>
            <person name="Dimitrov G."/>
            <person name="Watkins K."/>
            <person name="O'Connor K.J."/>
            <person name="Smith S."/>
            <person name="Utterback T.R."/>
            <person name="White O."/>
            <person name="Rubens C.E."/>
            <person name="Grandi G."/>
            <person name="Madoff L.C."/>
            <person name="Kasper D.L."/>
            <person name="Telford J.L."/>
            <person name="Wessels M.R."/>
            <person name="Rappuoli R."/>
            <person name="Fraser C.M."/>
        </authorList>
    </citation>
    <scope>NUCLEOTIDE SEQUENCE [LARGE SCALE GENOMIC DNA]</scope>
    <source>
        <strain>ATCC 27591 / A909 / CDC SS700</strain>
    </source>
</reference>
<feature type="chain" id="PRO_0000286298" description="Spermidine/putrescine import ATP-binding protein PotA">
    <location>
        <begin position="1"/>
        <end position="384"/>
    </location>
</feature>
<feature type="domain" description="ABC transporter" evidence="1">
    <location>
        <begin position="6"/>
        <end position="238"/>
    </location>
</feature>
<feature type="binding site" evidence="1">
    <location>
        <begin position="40"/>
        <end position="47"/>
    </location>
    <ligand>
        <name>ATP</name>
        <dbReference type="ChEBI" id="CHEBI:30616"/>
    </ligand>
</feature>
<proteinExistence type="inferred from homology"/>
<evidence type="ECO:0000255" key="1">
    <source>
        <dbReference type="HAMAP-Rule" id="MF_01726"/>
    </source>
</evidence>
<name>POTA_STRA1</name>
<comment type="function">
    <text evidence="1">Part of the ABC transporter complex PotABCD involved in spermidine/putrescine import. Responsible for energy coupling to the transport system.</text>
</comment>
<comment type="catalytic activity">
    <reaction evidence="1">
        <text>ATP + H2O + polyamine-[polyamine-binding protein]Side 1 = ADP + phosphate + polyamineSide 2 + [polyamine-binding protein]Side 1.</text>
        <dbReference type="EC" id="7.6.2.11"/>
    </reaction>
</comment>
<comment type="subunit">
    <text evidence="1">The complex is composed of two ATP-binding proteins (PotA), two transmembrane proteins (PotB and PotC) and a solute-binding protein (PotD).</text>
</comment>
<comment type="subcellular location">
    <subcellularLocation>
        <location evidence="1">Cell membrane</location>
        <topology evidence="1">Peripheral membrane protein</topology>
    </subcellularLocation>
</comment>
<comment type="similarity">
    <text evidence="1">Belongs to the ABC transporter superfamily. Spermidine/putrescine importer (TC 3.A.1.11.1) family.</text>
</comment>
<protein>
    <recommendedName>
        <fullName evidence="1">Spermidine/putrescine import ATP-binding protein PotA</fullName>
        <ecNumber evidence="1">7.6.2.11</ecNumber>
    </recommendedName>
</protein>
<accession>Q3K0Y6</accession>
<dbReference type="EC" id="7.6.2.11" evidence="1"/>
<dbReference type="EMBL" id="CP000114">
    <property type="protein sequence ID" value="ABA45813.1"/>
    <property type="molecule type" value="Genomic_DNA"/>
</dbReference>
<dbReference type="RefSeq" id="WP_000184098.1">
    <property type="nucleotide sequence ID" value="NC_007432.1"/>
</dbReference>
<dbReference type="SMR" id="Q3K0Y6"/>
<dbReference type="KEGG" id="sak:SAK_1196"/>
<dbReference type="HOGENOM" id="CLU_000604_1_1_9"/>
<dbReference type="GO" id="GO:0043190">
    <property type="term" value="C:ATP-binding cassette (ABC) transporter complex"/>
    <property type="evidence" value="ECO:0007669"/>
    <property type="project" value="InterPro"/>
</dbReference>
<dbReference type="GO" id="GO:0015417">
    <property type="term" value="F:ABC-type polyamine transporter activity"/>
    <property type="evidence" value="ECO:0007669"/>
    <property type="project" value="UniProtKB-EC"/>
</dbReference>
<dbReference type="GO" id="GO:0005524">
    <property type="term" value="F:ATP binding"/>
    <property type="evidence" value="ECO:0007669"/>
    <property type="project" value="UniProtKB-KW"/>
</dbReference>
<dbReference type="GO" id="GO:0016887">
    <property type="term" value="F:ATP hydrolysis activity"/>
    <property type="evidence" value="ECO:0007669"/>
    <property type="project" value="InterPro"/>
</dbReference>
<dbReference type="FunFam" id="3.40.50.300:FF:000042">
    <property type="entry name" value="Maltose/maltodextrin ABC transporter, ATP-binding protein"/>
    <property type="match status" value="1"/>
</dbReference>
<dbReference type="Gene3D" id="2.40.50.100">
    <property type="match status" value="1"/>
</dbReference>
<dbReference type="Gene3D" id="3.40.50.300">
    <property type="entry name" value="P-loop containing nucleotide triphosphate hydrolases"/>
    <property type="match status" value="1"/>
</dbReference>
<dbReference type="InterPro" id="IPR003593">
    <property type="entry name" value="AAA+_ATPase"/>
</dbReference>
<dbReference type="InterPro" id="IPR050093">
    <property type="entry name" value="ABC_SmlMolc_Importer"/>
</dbReference>
<dbReference type="InterPro" id="IPR003439">
    <property type="entry name" value="ABC_transporter-like_ATP-bd"/>
</dbReference>
<dbReference type="InterPro" id="IPR017871">
    <property type="entry name" value="ABC_transporter-like_CS"/>
</dbReference>
<dbReference type="InterPro" id="IPR008995">
    <property type="entry name" value="Mo/tungstate-bd_C_term_dom"/>
</dbReference>
<dbReference type="InterPro" id="IPR027417">
    <property type="entry name" value="P-loop_NTPase"/>
</dbReference>
<dbReference type="InterPro" id="IPR005893">
    <property type="entry name" value="PotA-like"/>
</dbReference>
<dbReference type="InterPro" id="IPR013611">
    <property type="entry name" value="Transp-assoc_OB_typ2"/>
</dbReference>
<dbReference type="NCBIfam" id="TIGR01187">
    <property type="entry name" value="potA"/>
    <property type="match status" value="1"/>
</dbReference>
<dbReference type="PANTHER" id="PTHR42781">
    <property type="entry name" value="SPERMIDINE/PUTRESCINE IMPORT ATP-BINDING PROTEIN POTA"/>
    <property type="match status" value="1"/>
</dbReference>
<dbReference type="PANTHER" id="PTHR42781:SF4">
    <property type="entry name" value="SPERMIDINE_PUTRESCINE IMPORT ATP-BINDING PROTEIN POTA"/>
    <property type="match status" value="1"/>
</dbReference>
<dbReference type="Pfam" id="PF00005">
    <property type="entry name" value="ABC_tran"/>
    <property type="match status" value="1"/>
</dbReference>
<dbReference type="Pfam" id="PF08402">
    <property type="entry name" value="TOBE_2"/>
    <property type="match status" value="1"/>
</dbReference>
<dbReference type="SMART" id="SM00382">
    <property type="entry name" value="AAA"/>
    <property type="match status" value="1"/>
</dbReference>
<dbReference type="SUPFAM" id="SSF50331">
    <property type="entry name" value="MOP-like"/>
    <property type="match status" value="1"/>
</dbReference>
<dbReference type="SUPFAM" id="SSF52540">
    <property type="entry name" value="P-loop containing nucleoside triphosphate hydrolases"/>
    <property type="match status" value="1"/>
</dbReference>
<dbReference type="PROSITE" id="PS00211">
    <property type="entry name" value="ABC_TRANSPORTER_1"/>
    <property type="match status" value="1"/>
</dbReference>
<dbReference type="PROSITE" id="PS50893">
    <property type="entry name" value="ABC_TRANSPORTER_2"/>
    <property type="match status" value="1"/>
</dbReference>
<dbReference type="PROSITE" id="PS51305">
    <property type="entry name" value="POTA"/>
    <property type="match status" value="1"/>
</dbReference>
<organism>
    <name type="scientific">Streptococcus agalactiae serotype Ia (strain ATCC 27591 / A909 / CDC SS700)</name>
    <dbReference type="NCBI Taxonomy" id="205921"/>
    <lineage>
        <taxon>Bacteria</taxon>
        <taxon>Bacillati</taxon>
        <taxon>Bacillota</taxon>
        <taxon>Bacilli</taxon>
        <taxon>Lactobacillales</taxon>
        <taxon>Streptococcaceae</taxon>
        <taxon>Streptococcus</taxon>
    </lineage>
</organism>
<sequence length="384" mass="43898">MTNPIIAFKNVSKVFEDSNTVVLKDINFELEEGKFYTLLGASGSGKSTILNIIAGLLEASTGDIYLDGKRINDVPTNKRDVHTVFQNYALFPHMTVFENVAFPLKLKKMDKKEIQKRVQETLKMVRLEGFEKRAIQKLSGGQRQRVAIARAIINQPKVVLLDEPLSALDLKLRTEMQYELRELQQRLGITFVFVTHDQEEALAMSDWIFVMNEGEIVQSGTPVDIYDEPINHFVATFIGESNILSGKMIEDYLVEFNGKRFEAVDGGMRPNESVQVVIRPEDLQITLPDEGKLQVKVDTQLFRGVHYEIIAYDDLGNEWMIHSTRKAIEGEVIGLDFTPEDIHIMRLNETEEEFDARIEEYVDTDDHEDGLINAIEEERNEENL</sequence>
<keyword id="KW-0067">ATP-binding</keyword>
<keyword id="KW-1003">Cell membrane</keyword>
<keyword id="KW-0472">Membrane</keyword>
<keyword id="KW-0547">Nucleotide-binding</keyword>
<keyword id="KW-1278">Translocase</keyword>
<keyword id="KW-0813">Transport</keyword>
<gene>
    <name evidence="1" type="primary">potA</name>
    <name type="ordered locus">SAK_1196</name>
</gene>